<sequence>MDIAIHHPWIRRPFFPFHSPSRLFDQFFGEHLLESDLFSTSTSLSPFYLRPPSFFRAPSWIDTGLSEMRMEKDRLSVNLDVKHFSPEELKVKVLGDVIEVHGKHEERQDEHGFISREFHRKYRIPADVDPLTITSSLSSDGVLTVNGPRKQASGPERTIPITREEKPAVTAAPKK</sequence>
<accession>Q9EPF3</accession>
<comment type="function">
    <text evidence="4">May contribute to the transparency and refractive index of the lens. Has chaperone-like activity, preventing aggregation of various proteins under a wide range of stress conditions. In lens epithelial cells, stabilizes the ATP6V1A protein, preventing its degradation by the proteasome (By similarity).</text>
</comment>
<comment type="subunit">
    <text evidence="3 4">Heteromer composed of three CRYAA and one CRYAB subunits. Aggregates with homologous proteins, including the small heat shock protein HSPB1, to form large heteromeric complexes. Inter-subunit bridging via zinc ions enhances stability, which is crucial as there is no protein turn over in the lens. Interacts with HSPBAP1 and TTN/titin. Interacts with TMEM109; in the cellular response to DNA damage. Interacts with DES; binds rapidly during early stages of DES filament assembly and a reduced binding seen in the later stages. Interacts with ATP6V1A and with MTOR, forming a ternary complex (By similarity).</text>
</comment>
<comment type="subcellular location">
    <subcellularLocation>
        <location evidence="3">Cytoplasm</location>
    </subcellularLocation>
    <subcellularLocation>
        <location evidence="3">Nucleus</location>
    </subcellularLocation>
    <subcellularLocation>
        <location evidence="3">Secreted</location>
    </subcellularLocation>
    <subcellularLocation>
        <location evidence="4">Lysosome</location>
    </subcellularLocation>
    <text evidence="3">Translocates to the nucleus during heat shock and resides in sub-nuclear structures known as SC35 speckles or nuclear splicing speckles. Localizes at the Z-bands and the intercalated disk in cardiomyocytes.</text>
</comment>
<comment type="tissue specificity">
    <text>Lens as well as other tissues.</text>
</comment>
<comment type="similarity">
    <text evidence="6">Belongs to the small heat shock protein (HSP20) family.</text>
</comment>
<name>CRYAB_SPAJD</name>
<dbReference type="EMBL" id="AJ293658">
    <property type="protein sequence ID" value="CAC01692.1"/>
    <property type="molecule type" value="mRNA"/>
</dbReference>
<dbReference type="SMR" id="Q9EPF3"/>
<dbReference type="GlyCosmos" id="Q9EPF3">
    <property type="glycosylation" value="1 site, No reported glycans"/>
</dbReference>
<dbReference type="GO" id="GO:0005737">
    <property type="term" value="C:cytoplasm"/>
    <property type="evidence" value="ECO:0000250"/>
    <property type="project" value="UniProtKB"/>
</dbReference>
<dbReference type="GO" id="GO:0005576">
    <property type="term" value="C:extracellular region"/>
    <property type="evidence" value="ECO:0007669"/>
    <property type="project" value="UniProtKB-SubCell"/>
</dbReference>
<dbReference type="GO" id="GO:0005764">
    <property type="term" value="C:lysosome"/>
    <property type="evidence" value="ECO:0007669"/>
    <property type="project" value="UniProtKB-SubCell"/>
</dbReference>
<dbReference type="GO" id="GO:0005634">
    <property type="term" value="C:nucleus"/>
    <property type="evidence" value="ECO:0000250"/>
    <property type="project" value="UniProtKB"/>
</dbReference>
<dbReference type="GO" id="GO:0032991">
    <property type="term" value="C:protein-containing complex"/>
    <property type="evidence" value="ECO:0000250"/>
    <property type="project" value="UniProtKB"/>
</dbReference>
<dbReference type="GO" id="GO:0046872">
    <property type="term" value="F:metal ion binding"/>
    <property type="evidence" value="ECO:0007669"/>
    <property type="project" value="UniProtKB-KW"/>
</dbReference>
<dbReference type="GO" id="GO:0042803">
    <property type="term" value="F:protein homodimerization activity"/>
    <property type="evidence" value="ECO:0000250"/>
    <property type="project" value="UniProtKB"/>
</dbReference>
<dbReference type="GO" id="GO:0005212">
    <property type="term" value="F:structural constituent of eye lens"/>
    <property type="evidence" value="ECO:0007669"/>
    <property type="project" value="UniProtKB-KW"/>
</dbReference>
<dbReference type="GO" id="GO:0051082">
    <property type="term" value="F:unfolded protein binding"/>
    <property type="evidence" value="ECO:0007669"/>
    <property type="project" value="TreeGrafter"/>
</dbReference>
<dbReference type="GO" id="GO:0043066">
    <property type="term" value="P:negative regulation of apoptotic process"/>
    <property type="evidence" value="ECO:0007669"/>
    <property type="project" value="TreeGrafter"/>
</dbReference>
<dbReference type="GO" id="GO:0045892">
    <property type="term" value="P:negative regulation of DNA-templated transcription"/>
    <property type="evidence" value="ECO:0000250"/>
    <property type="project" value="UniProtKB"/>
</dbReference>
<dbReference type="GO" id="GO:0042026">
    <property type="term" value="P:protein refolding"/>
    <property type="evidence" value="ECO:0007669"/>
    <property type="project" value="TreeGrafter"/>
</dbReference>
<dbReference type="GO" id="GO:0009408">
    <property type="term" value="P:response to heat"/>
    <property type="evidence" value="ECO:0007669"/>
    <property type="project" value="TreeGrafter"/>
</dbReference>
<dbReference type="FunFam" id="2.60.40.790:FF:000011">
    <property type="entry name" value="Alpha-crystallin B chain"/>
    <property type="match status" value="1"/>
</dbReference>
<dbReference type="Gene3D" id="2.60.40.790">
    <property type="match status" value="1"/>
</dbReference>
<dbReference type="InterPro" id="IPR002068">
    <property type="entry name" value="A-crystallin/Hsp20_dom"/>
</dbReference>
<dbReference type="InterPro" id="IPR055269">
    <property type="entry name" value="Alpha-crystallin/HSP_16"/>
</dbReference>
<dbReference type="InterPro" id="IPR001436">
    <property type="entry name" value="Alpha-crystallin/sHSP_animal"/>
</dbReference>
<dbReference type="InterPro" id="IPR003090">
    <property type="entry name" value="Alpha-crystallin_N"/>
</dbReference>
<dbReference type="InterPro" id="IPR008978">
    <property type="entry name" value="HSP20-like_chaperone"/>
</dbReference>
<dbReference type="PANTHER" id="PTHR45640:SF5">
    <property type="entry name" value="ALPHA-CRYSTALLIN B CHAIN"/>
    <property type="match status" value="1"/>
</dbReference>
<dbReference type="PANTHER" id="PTHR45640">
    <property type="entry name" value="HEAT SHOCK PROTEIN HSP-12.2-RELATED"/>
    <property type="match status" value="1"/>
</dbReference>
<dbReference type="Pfam" id="PF00525">
    <property type="entry name" value="Crystallin"/>
    <property type="match status" value="1"/>
</dbReference>
<dbReference type="Pfam" id="PF00011">
    <property type="entry name" value="HSP20"/>
    <property type="match status" value="1"/>
</dbReference>
<dbReference type="PIRSF" id="PIRSF036514">
    <property type="entry name" value="Sm_HSP_B1"/>
    <property type="match status" value="1"/>
</dbReference>
<dbReference type="PRINTS" id="PR00299">
    <property type="entry name" value="ACRYSTALLIN"/>
</dbReference>
<dbReference type="SUPFAM" id="SSF49764">
    <property type="entry name" value="HSP20-like chaperones"/>
    <property type="match status" value="1"/>
</dbReference>
<dbReference type="PROSITE" id="PS01031">
    <property type="entry name" value="SHSP"/>
    <property type="match status" value="1"/>
</dbReference>
<organism>
    <name type="scientific">Spalax judaei</name>
    <name type="common">Judean Mountains blind mole rat</name>
    <name type="synonym">Nannospalax judaei</name>
    <dbReference type="NCBI Taxonomy" id="134510"/>
    <lineage>
        <taxon>Eukaryota</taxon>
        <taxon>Metazoa</taxon>
        <taxon>Chordata</taxon>
        <taxon>Craniata</taxon>
        <taxon>Vertebrata</taxon>
        <taxon>Euteleostomi</taxon>
        <taxon>Mammalia</taxon>
        <taxon>Eutheria</taxon>
        <taxon>Euarchontoglires</taxon>
        <taxon>Glires</taxon>
        <taxon>Rodentia</taxon>
        <taxon>Myomorpha</taxon>
        <taxon>Muroidea</taxon>
        <taxon>Spalacidae</taxon>
        <taxon>Spalacinae</taxon>
        <taxon>Nannospalax</taxon>
    </lineage>
</organism>
<reference key="1">
    <citation type="journal article" date="2001" name="Gene">
        <title>The lens protein alpha-B-crystallin of the blind subterranean mole-rat: high homology with sighted mammals.</title>
        <authorList>
            <person name="Avivi A."/>
            <person name="Joel A."/>
            <person name="Nevo E."/>
        </authorList>
    </citation>
    <scope>NUCLEOTIDE SEQUENCE [MRNA]</scope>
    <source>
        <strain>Isolate Anza population</strain>
        <tissue>Heart</tissue>
        <tissue>Lens</tissue>
    </source>
</reference>
<gene>
    <name type="primary">CRYAB</name>
</gene>
<keyword id="KW-0007">Acetylation</keyword>
<keyword id="KW-0143">Chaperone</keyword>
<keyword id="KW-0963">Cytoplasm</keyword>
<keyword id="KW-0273">Eye lens protein</keyword>
<keyword id="KW-0325">Glycoprotein</keyword>
<keyword id="KW-0458">Lysosome</keyword>
<keyword id="KW-0479">Metal-binding</keyword>
<keyword id="KW-0488">Methylation</keyword>
<keyword id="KW-0539">Nucleus</keyword>
<keyword id="KW-0597">Phosphoprotein</keyword>
<keyword id="KW-0964">Secreted</keyword>
<keyword id="KW-0862">Zinc</keyword>
<protein>
    <recommendedName>
        <fullName>Alpha-crystallin B chain</fullName>
    </recommendedName>
    <alternativeName>
        <fullName>Alpha(B)-crystallin</fullName>
    </alternativeName>
</protein>
<evidence type="ECO:0000250" key="1"/>
<evidence type="ECO:0000250" key="2">
    <source>
        <dbReference type="UniProtKB" id="P02510"/>
    </source>
</evidence>
<evidence type="ECO:0000250" key="3">
    <source>
        <dbReference type="UniProtKB" id="P02511"/>
    </source>
</evidence>
<evidence type="ECO:0000250" key="4">
    <source>
        <dbReference type="UniProtKB" id="P23927"/>
    </source>
</evidence>
<evidence type="ECO:0000250" key="5">
    <source>
        <dbReference type="UniProtKB" id="P23928"/>
    </source>
</evidence>
<evidence type="ECO:0000255" key="6">
    <source>
        <dbReference type="PROSITE-ProRule" id="PRU00285"/>
    </source>
</evidence>
<evidence type="ECO:0000256" key="7">
    <source>
        <dbReference type="SAM" id="MobiDB-lite"/>
    </source>
</evidence>
<feature type="chain" id="PRO_0000125915" description="Alpha-crystallin B chain">
    <location>
        <begin position="1"/>
        <end position="175"/>
    </location>
</feature>
<feature type="domain" description="sHSP" evidence="6">
    <location>
        <begin position="56"/>
        <end position="164"/>
    </location>
</feature>
<feature type="region of interest" description="Disordered" evidence="7">
    <location>
        <begin position="142"/>
        <end position="175"/>
    </location>
</feature>
<feature type="binding site" evidence="1">
    <location>
        <position position="83"/>
    </location>
    <ligand>
        <name>Zn(2+)</name>
        <dbReference type="ChEBI" id="CHEBI:29105"/>
        <label>1</label>
    </ligand>
</feature>
<feature type="binding site" evidence="1">
    <location>
        <position position="104"/>
    </location>
    <ligand>
        <name>Zn(2+)</name>
        <dbReference type="ChEBI" id="CHEBI:29105"/>
        <label>2</label>
    </ligand>
</feature>
<feature type="binding site" evidence="1">
    <location>
        <position position="106"/>
    </location>
    <ligand>
        <name>Zn(2+)</name>
        <dbReference type="ChEBI" id="CHEBI:29105"/>
        <label>2</label>
    </ligand>
</feature>
<feature type="binding site" evidence="1">
    <location>
        <position position="111"/>
    </location>
    <ligand>
        <name>Zn(2+)</name>
        <dbReference type="ChEBI" id="CHEBI:29105"/>
        <label>1</label>
    </ligand>
</feature>
<feature type="binding site" evidence="1">
    <location>
        <position position="119"/>
    </location>
    <ligand>
        <name>Zn(2+)</name>
        <dbReference type="ChEBI" id="CHEBI:29105"/>
        <label>1</label>
    </ligand>
</feature>
<feature type="modified residue" description="N-acetylmethionine" evidence="2">
    <location>
        <position position="1"/>
    </location>
</feature>
<feature type="modified residue" description="Phosphoserine" evidence="2">
    <location>
        <position position="19"/>
    </location>
</feature>
<feature type="modified residue" description="Phosphoserine" evidence="2">
    <location>
        <position position="45"/>
    </location>
</feature>
<feature type="modified residue" description="Phosphoserine" evidence="2">
    <location>
        <position position="59"/>
    </location>
</feature>
<feature type="modified residue" description="N6-acetyllysine" evidence="3">
    <location>
        <position position="92"/>
    </location>
</feature>
<feature type="modified residue" description="N6-acetyllysine" evidence="3">
    <location>
        <position position="166"/>
    </location>
</feature>
<feature type="glycosylation site" description="O-linked (GlcNAc) serine" evidence="3">
    <location>
        <position position="41"/>
    </location>
</feature>
<feature type="glycosylation site" description="O-linked (GlcNAc) threonine" evidence="5">
    <location>
        <position position="170"/>
    </location>
</feature>
<proteinExistence type="evidence at transcript level"/>